<dbReference type="EMBL" id="CP000685">
    <property type="protein sequence ID" value="ABQ03428.1"/>
    <property type="molecule type" value="Genomic_DNA"/>
</dbReference>
<dbReference type="RefSeq" id="WP_007803631.1">
    <property type="nucleotide sequence ID" value="NZ_MUGZ01000005.1"/>
</dbReference>
<dbReference type="SMR" id="A5FMZ5"/>
<dbReference type="STRING" id="376686.Fjoh_0392"/>
<dbReference type="KEGG" id="fjo:Fjoh_0392"/>
<dbReference type="eggNOG" id="COG0091">
    <property type="taxonomic scope" value="Bacteria"/>
</dbReference>
<dbReference type="HOGENOM" id="CLU_083987_3_1_10"/>
<dbReference type="OrthoDB" id="9805969at2"/>
<dbReference type="Proteomes" id="UP000006694">
    <property type="component" value="Chromosome"/>
</dbReference>
<dbReference type="GO" id="GO:0022625">
    <property type="term" value="C:cytosolic large ribosomal subunit"/>
    <property type="evidence" value="ECO:0007669"/>
    <property type="project" value="TreeGrafter"/>
</dbReference>
<dbReference type="GO" id="GO:0019843">
    <property type="term" value="F:rRNA binding"/>
    <property type="evidence" value="ECO:0007669"/>
    <property type="project" value="UniProtKB-UniRule"/>
</dbReference>
<dbReference type="GO" id="GO:0003735">
    <property type="term" value="F:structural constituent of ribosome"/>
    <property type="evidence" value="ECO:0007669"/>
    <property type="project" value="InterPro"/>
</dbReference>
<dbReference type="GO" id="GO:0006412">
    <property type="term" value="P:translation"/>
    <property type="evidence" value="ECO:0007669"/>
    <property type="project" value="UniProtKB-UniRule"/>
</dbReference>
<dbReference type="CDD" id="cd00336">
    <property type="entry name" value="Ribosomal_L22"/>
    <property type="match status" value="1"/>
</dbReference>
<dbReference type="Gene3D" id="3.90.470.10">
    <property type="entry name" value="Ribosomal protein L22/L17"/>
    <property type="match status" value="1"/>
</dbReference>
<dbReference type="HAMAP" id="MF_01331_B">
    <property type="entry name" value="Ribosomal_uL22_B"/>
    <property type="match status" value="1"/>
</dbReference>
<dbReference type="InterPro" id="IPR001063">
    <property type="entry name" value="Ribosomal_uL22"/>
</dbReference>
<dbReference type="InterPro" id="IPR005727">
    <property type="entry name" value="Ribosomal_uL22_bac/chlpt-type"/>
</dbReference>
<dbReference type="InterPro" id="IPR047867">
    <property type="entry name" value="Ribosomal_uL22_bac/org-type"/>
</dbReference>
<dbReference type="InterPro" id="IPR036394">
    <property type="entry name" value="Ribosomal_uL22_sf"/>
</dbReference>
<dbReference type="NCBIfam" id="TIGR01044">
    <property type="entry name" value="rplV_bact"/>
    <property type="match status" value="1"/>
</dbReference>
<dbReference type="PANTHER" id="PTHR13501">
    <property type="entry name" value="CHLOROPLAST 50S RIBOSOMAL PROTEIN L22-RELATED"/>
    <property type="match status" value="1"/>
</dbReference>
<dbReference type="PANTHER" id="PTHR13501:SF8">
    <property type="entry name" value="LARGE RIBOSOMAL SUBUNIT PROTEIN UL22M"/>
    <property type="match status" value="1"/>
</dbReference>
<dbReference type="Pfam" id="PF00237">
    <property type="entry name" value="Ribosomal_L22"/>
    <property type="match status" value="1"/>
</dbReference>
<dbReference type="SUPFAM" id="SSF54843">
    <property type="entry name" value="Ribosomal protein L22"/>
    <property type="match status" value="1"/>
</dbReference>
<comment type="function">
    <text evidence="1">This protein binds specifically to 23S rRNA; its binding is stimulated by other ribosomal proteins, e.g. L4, L17, and L20. It is important during the early stages of 50S assembly. It makes multiple contacts with different domains of the 23S rRNA in the assembled 50S subunit and ribosome (By similarity).</text>
</comment>
<comment type="function">
    <text evidence="1">The globular domain of the protein is located near the polypeptide exit tunnel on the outside of the subunit, while an extended beta-hairpin is found that lines the wall of the exit tunnel in the center of the 70S ribosome.</text>
</comment>
<comment type="subunit">
    <text evidence="1">Part of the 50S ribosomal subunit.</text>
</comment>
<comment type="similarity">
    <text evidence="1">Belongs to the universal ribosomal protein uL22 family.</text>
</comment>
<organism>
    <name type="scientific">Flavobacterium johnsoniae (strain ATCC 17061 / DSM 2064 / JCM 8514 / BCRC 14874 / CCUG 350202 / NBRC 14942 / NCIMB 11054 / UW101)</name>
    <name type="common">Cytophaga johnsonae</name>
    <dbReference type="NCBI Taxonomy" id="376686"/>
    <lineage>
        <taxon>Bacteria</taxon>
        <taxon>Pseudomonadati</taxon>
        <taxon>Bacteroidota</taxon>
        <taxon>Flavobacteriia</taxon>
        <taxon>Flavobacteriales</taxon>
        <taxon>Flavobacteriaceae</taxon>
        <taxon>Flavobacterium</taxon>
    </lineage>
</organism>
<sequence length="137" mass="15445">MGVRKRETADARKEANKSIAFAKLNNCPTSPRKMRLVADLVRGQKVERALNILRFSSKEASRKLEKLLLSAINNWEQKNSEGNLEEAGLFVKEIRVDGGMMLKRLRPAPQGRAHRIRKRSNHVTIVLGAINNTQSNS</sequence>
<protein>
    <recommendedName>
        <fullName evidence="1">Large ribosomal subunit protein uL22</fullName>
    </recommendedName>
    <alternativeName>
        <fullName evidence="2">50S ribosomal protein L22</fullName>
    </alternativeName>
</protein>
<gene>
    <name evidence="1" type="primary">rplV</name>
    <name type="ordered locus">Fjoh_0392</name>
</gene>
<proteinExistence type="inferred from homology"/>
<name>RL22_FLAJ1</name>
<reference key="1">
    <citation type="journal article" date="2009" name="Appl. Environ. Microbiol.">
        <title>Novel features of the polysaccharide-digesting gliding bacterium Flavobacterium johnsoniae as revealed by genome sequence analysis.</title>
        <authorList>
            <person name="McBride M.J."/>
            <person name="Xie G."/>
            <person name="Martens E.C."/>
            <person name="Lapidus A."/>
            <person name="Henrissat B."/>
            <person name="Rhodes R.G."/>
            <person name="Goltsman E."/>
            <person name="Wang W."/>
            <person name="Xu J."/>
            <person name="Hunnicutt D.W."/>
            <person name="Staroscik A.M."/>
            <person name="Hoover T.R."/>
            <person name="Cheng Y.Q."/>
            <person name="Stein J.L."/>
        </authorList>
    </citation>
    <scope>NUCLEOTIDE SEQUENCE [LARGE SCALE GENOMIC DNA]</scope>
    <source>
        <strain>ATCC 17061 / DSM 2064 / JCM 8514 / BCRC 14874 / CCUG 350202 / NBRC 14942 / NCIMB 11054 / UW101</strain>
    </source>
</reference>
<keyword id="KW-0687">Ribonucleoprotein</keyword>
<keyword id="KW-0689">Ribosomal protein</keyword>
<keyword id="KW-0694">RNA-binding</keyword>
<keyword id="KW-0699">rRNA-binding</keyword>
<feature type="chain" id="PRO_0000354471" description="Large ribosomal subunit protein uL22">
    <location>
        <begin position="1"/>
        <end position="137"/>
    </location>
</feature>
<accession>A5FMZ5</accession>
<evidence type="ECO:0000255" key="1">
    <source>
        <dbReference type="HAMAP-Rule" id="MF_01331"/>
    </source>
</evidence>
<evidence type="ECO:0000305" key="2"/>